<protein>
    <recommendedName>
        <fullName>Scarecrow-like protein 29</fullName>
        <shortName>AtSCL29</shortName>
    </recommendedName>
    <alternativeName>
        <fullName>GRAS family protein 16</fullName>
        <shortName>AtGRAS-16</shortName>
    </alternativeName>
</protein>
<accession>Q9LRW3</accession>
<keyword id="KW-0539">Nucleus</keyword>
<keyword id="KW-1185">Reference proteome</keyword>
<keyword id="KW-0804">Transcription</keyword>
<keyword id="KW-0805">Transcription regulation</keyword>
<gene>
    <name type="primary">SCL29</name>
    <name type="ordered locus">At3g13840</name>
    <name type="ORF">MCP4.6</name>
</gene>
<organism>
    <name type="scientific">Arabidopsis thaliana</name>
    <name type="common">Mouse-ear cress</name>
    <dbReference type="NCBI Taxonomy" id="3702"/>
    <lineage>
        <taxon>Eukaryota</taxon>
        <taxon>Viridiplantae</taxon>
        <taxon>Streptophyta</taxon>
        <taxon>Embryophyta</taxon>
        <taxon>Tracheophyta</taxon>
        <taxon>Spermatophyta</taxon>
        <taxon>Magnoliopsida</taxon>
        <taxon>eudicotyledons</taxon>
        <taxon>Gunneridae</taxon>
        <taxon>Pentapetalae</taxon>
        <taxon>rosids</taxon>
        <taxon>malvids</taxon>
        <taxon>Brassicales</taxon>
        <taxon>Brassicaceae</taxon>
        <taxon>Camelineae</taxon>
        <taxon>Arabidopsis</taxon>
    </lineage>
</organism>
<proteinExistence type="evidence at transcript level"/>
<name>SCL29_ARATH</name>
<reference key="1">
    <citation type="journal article" date="2000" name="DNA Res.">
        <title>Structural analysis of Arabidopsis thaliana chromosome 3. I. Sequence features of the regions of 4,504,864 bp covered by sixty P1 and TAC clones.</title>
        <authorList>
            <person name="Sato S."/>
            <person name="Nakamura Y."/>
            <person name="Kaneko T."/>
            <person name="Katoh T."/>
            <person name="Asamizu E."/>
            <person name="Tabata S."/>
        </authorList>
    </citation>
    <scope>NUCLEOTIDE SEQUENCE [LARGE SCALE GENOMIC DNA]</scope>
    <source>
        <strain>cv. Columbia</strain>
    </source>
</reference>
<reference key="2">
    <citation type="journal article" date="2017" name="Plant J.">
        <title>Araport11: a complete reannotation of the Arabidopsis thaliana reference genome.</title>
        <authorList>
            <person name="Cheng C.Y."/>
            <person name="Krishnakumar V."/>
            <person name="Chan A.P."/>
            <person name="Thibaud-Nissen F."/>
            <person name="Schobel S."/>
            <person name="Town C.D."/>
        </authorList>
    </citation>
    <scope>GENOME REANNOTATION</scope>
    <source>
        <strain>cv. Columbia</strain>
    </source>
</reference>
<reference key="3">
    <citation type="journal article" date="2004" name="Plant Mol. Biol.">
        <title>Genome-wide analysis of the GRAS gene family in rice and Arabidopsis.</title>
        <authorList>
            <person name="Tian C."/>
            <person name="Wan P."/>
            <person name="Sun S."/>
            <person name="Li J."/>
            <person name="Chen M."/>
        </authorList>
    </citation>
    <scope>GENE FAMILY</scope>
</reference>
<reference key="4">
    <citation type="journal article" date="2008" name="Plant Mol. Biol.">
        <title>Large-scale analysis of the GRAS gene family in Arabidopsis thaliana.</title>
        <authorList>
            <person name="Lee M.-H."/>
            <person name="Kim B."/>
            <person name="Song S.-K."/>
            <person name="Heo J.-O."/>
            <person name="Yu N.-I."/>
            <person name="Lee S.A."/>
            <person name="Kim M."/>
            <person name="Kim D.G."/>
            <person name="Sohn S.O."/>
            <person name="Lim C.E."/>
            <person name="Chang K.S."/>
            <person name="Lee M.M."/>
            <person name="Lim J."/>
        </authorList>
    </citation>
    <scope>GENE FAMILY</scope>
    <scope>TISSUE SPECIFICITY</scope>
</reference>
<sequence length="510" mass="57181">MLLEETEPPNQTLDHVLSWLEDSVSLSPLPGFDDSYLLHEFDGSQTWEWDQTQDPEHGFIQSYSQDLSAAYVGCEATNLEVVTEAPSIDLDLPPEIQQPNDQSRKRSHDGFLEAQQVKKSARSKRKAIKSSEKSSKDGNKEGRWAEKLLNPCALAITASNSSRVQHYLCVLSELASSSGDANRRLAAFGLRALQHHLSSSSVSSSFWPVFTFASAEVKMFQKTLLKFYEVSPWFALPNNMANSAILQILAQDPKDKKDLHIIDIGVSHGMQWPTLLEALSCRLEGPPPRVRITVISDLTADIPFSVGPPGYNYGSQLLGFARSLKINLQISVLDKLQLIDTSPHENLIVCAQFRLHHLKHSINDERGETLKAVRSLRPKGVVLCENNGECSSSADFAAGFSKKLEYVWKFLDSTSSGFKEENSEERKLMEGEATKVLMNAGDMNEGKEKWYERMREAGFFVEAFEEDAVDGAKSLLRKYDNNWEIRMEDGDTFAGLMWKGEAVSFCSLWK</sequence>
<dbReference type="EMBL" id="AB028610">
    <property type="protein sequence ID" value="BAB02908.1"/>
    <property type="molecule type" value="Genomic_DNA"/>
</dbReference>
<dbReference type="EMBL" id="CP002686">
    <property type="protein sequence ID" value="AEE75423.1"/>
    <property type="molecule type" value="Genomic_DNA"/>
</dbReference>
<dbReference type="RefSeq" id="NP_188000.1">
    <property type="nucleotide sequence ID" value="NM_112237.2"/>
</dbReference>
<dbReference type="SMR" id="Q9LRW3"/>
<dbReference type="FunCoup" id="Q9LRW3">
    <property type="interactions" value="44"/>
</dbReference>
<dbReference type="STRING" id="3702.Q9LRW3"/>
<dbReference type="iPTMnet" id="Q9LRW3"/>
<dbReference type="PaxDb" id="3702-AT3G13840.1"/>
<dbReference type="EnsemblPlants" id="AT3G13840.1">
    <property type="protein sequence ID" value="AT3G13840.1"/>
    <property type="gene ID" value="AT3G13840"/>
</dbReference>
<dbReference type="GeneID" id="820596"/>
<dbReference type="Gramene" id="AT3G13840.1">
    <property type="protein sequence ID" value="AT3G13840.1"/>
    <property type="gene ID" value="AT3G13840"/>
</dbReference>
<dbReference type="KEGG" id="ath:AT3G13840"/>
<dbReference type="Araport" id="AT3G13840"/>
<dbReference type="TAIR" id="AT3G13840"/>
<dbReference type="eggNOG" id="ENOG502QSHA">
    <property type="taxonomic scope" value="Eukaryota"/>
</dbReference>
<dbReference type="HOGENOM" id="CLU_011924_5_1_1"/>
<dbReference type="InParanoid" id="Q9LRW3"/>
<dbReference type="OMA" id="WCERMRG"/>
<dbReference type="PhylomeDB" id="Q9LRW3"/>
<dbReference type="PRO" id="PR:Q9LRW3"/>
<dbReference type="Proteomes" id="UP000006548">
    <property type="component" value="Chromosome 3"/>
</dbReference>
<dbReference type="ExpressionAtlas" id="Q9LRW3">
    <property type="expression patterns" value="baseline and differential"/>
</dbReference>
<dbReference type="GO" id="GO:0005634">
    <property type="term" value="C:nucleus"/>
    <property type="evidence" value="ECO:0007669"/>
    <property type="project" value="UniProtKB-SubCell"/>
</dbReference>
<dbReference type="GO" id="GO:0003700">
    <property type="term" value="F:DNA-binding transcription factor activity"/>
    <property type="evidence" value="ECO:0000250"/>
    <property type="project" value="TAIR"/>
</dbReference>
<dbReference type="GO" id="GO:0042446">
    <property type="term" value="P:hormone biosynthetic process"/>
    <property type="evidence" value="ECO:0007669"/>
    <property type="project" value="EnsemblPlants"/>
</dbReference>
<dbReference type="GO" id="GO:0006355">
    <property type="term" value="P:regulation of DNA-templated transcription"/>
    <property type="evidence" value="ECO:0000304"/>
    <property type="project" value="TAIR"/>
</dbReference>
<dbReference type="GO" id="GO:2000032">
    <property type="term" value="P:regulation of secondary shoot formation"/>
    <property type="evidence" value="ECO:0007669"/>
    <property type="project" value="EnsemblPlants"/>
</dbReference>
<dbReference type="InterPro" id="IPR005202">
    <property type="entry name" value="TF_GRAS"/>
</dbReference>
<dbReference type="PANTHER" id="PTHR31636">
    <property type="entry name" value="OSJNBA0084A10.13 PROTEIN-RELATED"/>
    <property type="match status" value="1"/>
</dbReference>
<dbReference type="Pfam" id="PF03514">
    <property type="entry name" value="GRAS"/>
    <property type="match status" value="1"/>
</dbReference>
<dbReference type="PROSITE" id="PS50985">
    <property type="entry name" value="GRAS"/>
    <property type="match status" value="1"/>
</dbReference>
<comment type="function">
    <text evidence="1">Probable transcription factor involved in plant development.</text>
</comment>
<comment type="subcellular location">
    <subcellularLocation>
        <location evidence="5">Nucleus</location>
    </subcellularLocation>
</comment>
<comment type="tissue specificity">
    <text evidence="4">Expressed in seedlings, roots and flowers.</text>
</comment>
<comment type="similarity">
    <text evidence="5">Belongs to the GRAS family.</text>
</comment>
<feature type="chain" id="PRO_0000350866" description="Scarecrow-like protein 29">
    <location>
        <begin position="1"/>
        <end position="510"/>
    </location>
</feature>
<feature type="domain" description="GRAS" evidence="2">
    <location>
        <begin position="136"/>
        <end position="510"/>
    </location>
</feature>
<feature type="region of interest" description="Disordered" evidence="3">
    <location>
        <begin position="90"/>
        <end position="142"/>
    </location>
</feature>
<feature type="region of interest" description="Leucine repeat I (LRI)" evidence="2">
    <location>
        <begin position="143"/>
        <end position="205"/>
    </location>
</feature>
<feature type="region of interest" description="VHIID" evidence="2">
    <location>
        <begin position="224"/>
        <end position="294"/>
    </location>
</feature>
<feature type="region of interest" description="Leucine repeat II (LRII)" evidence="2">
    <location>
        <begin position="312"/>
        <end position="337"/>
    </location>
</feature>
<feature type="region of interest" description="PFYRE" evidence="2">
    <location>
        <begin position="347"/>
        <end position="435"/>
    </location>
</feature>
<feature type="region of interest" description="SAW" evidence="2">
    <location>
        <begin position="438"/>
        <end position="510"/>
    </location>
</feature>
<feature type="short sequence motif" description="VHIID" evidence="2">
    <location>
        <begin position="259"/>
        <end position="263"/>
    </location>
</feature>
<feature type="compositionally biased region" description="Basic and acidic residues" evidence="3">
    <location>
        <begin position="102"/>
        <end position="111"/>
    </location>
</feature>
<feature type="compositionally biased region" description="Basic residues" evidence="3">
    <location>
        <begin position="119"/>
        <end position="128"/>
    </location>
</feature>
<feature type="compositionally biased region" description="Basic and acidic residues" evidence="3">
    <location>
        <begin position="129"/>
        <end position="142"/>
    </location>
</feature>
<evidence type="ECO:0000250" key="1"/>
<evidence type="ECO:0000255" key="2">
    <source>
        <dbReference type="PROSITE-ProRule" id="PRU01191"/>
    </source>
</evidence>
<evidence type="ECO:0000256" key="3">
    <source>
        <dbReference type="SAM" id="MobiDB-lite"/>
    </source>
</evidence>
<evidence type="ECO:0000269" key="4">
    <source>
    </source>
</evidence>
<evidence type="ECO:0000305" key="5"/>